<reference key="1">
    <citation type="journal article" date="2005" name="Science">
        <title>The transcriptional landscape of the mammalian genome.</title>
        <authorList>
            <person name="Carninci P."/>
            <person name="Kasukawa T."/>
            <person name="Katayama S."/>
            <person name="Gough J."/>
            <person name="Frith M.C."/>
            <person name="Maeda N."/>
            <person name="Oyama R."/>
            <person name="Ravasi T."/>
            <person name="Lenhard B."/>
            <person name="Wells C."/>
            <person name="Kodzius R."/>
            <person name="Shimokawa K."/>
            <person name="Bajic V.B."/>
            <person name="Brenner S.E."/>
            <person name="Batalov S."/>
            <person name="Forrest A.R."/>
            <person name="Zavolan M."/>
            <person name="Davis M.J."/>
            <person name="Wilming L.G."/>
            <person name="Aidinis V."/>
            <person name="Allen J.E."/>
            <person name="Ambesi-Impiombato A."/>
            <person name="Apweiler R."/>
            <person name="Aturaliya R.N."/>
            <person name="Bailey T.L."/>
            <person name="Bansal M."/>
            <person name="Baxter L."/>
            <person name="Beisel K.W."/>
            <person name="Bersano T."/>
            <person name="Bono H."/>
            <person name="Chalk A.M."/>
            <person name="Chiu K.P."/>
            <person name="Choudhary V."/>
            <person name="Christoffels A."/>
            <person name="Clutterbuck D.R."/>
            <person name="Crowe M.L."/>
            <person name="Dalla E."/>
            <person name="Dalrymple B.P."/>
            <person name="de Bono B."/>
            <person name="Della Gatta G."/>
            <person name="di Bernardo D."/>
            <person name="Down T."/>
            <person name="Engstrom P."/>
            <person name="Fagiolini M."/>
            <person name="Faulkner G."/>
            <person name="Fletcher C.F."/>
            <person name="Fukushima T."/>
            <person name="Furuno M."/>
            <person name="Futaki S."/>
            <person name="Gariboldi M."/>
            <person name="Georgii-Hemming P."/>
            <person name="Gingeras T.R."/>
            <person name="Gojobori T."/>
            <person name="Green R.E."/>
            <person name="Gustincich S."/>
            <person name="Harbers M."/>
            <person name="Hayashi Y."/>
            <person name="Hensch T.K."/>
            <person name="Hirokawa N."/>
            <person name="Hill D."/>
            <person name="Huminiecki L."/>
            <person name="Iacono M."/>
            <person name="Ikeo K."/>
            <person name="Iwama A."/>
            <person name="Ishikawa T."/>
            <person name="Jakt M."/>
            <person name="Kanapin A."/>
            <person name="Katoh M."/>
            <person name="Kawasawa Y."/>
            <person name="Kelso J."/>
            <person name="Kitamura H."/>
            <person name="Kitano H."/>
            <person name="Kollias G."/>
            <person name="Krishnan S.P."/>
            <person name="Kruger A."/>
            <person name="Kummerfeld S.K."/>
            <person name="Kurochkin I.V."/>
            <person name="Lareau L.F."/>
            <person name="Lazarevic D."/>
            <person name="Lipovich L."/>
            <person name="Liu J."/>
            <person name="Liuni S."/>
            <person name="McWilliam S."/>
            <person name="Madan Babu M."/>
            <person name="Madera M."/>
            <person name="Marchionni L."/>
            <person name="Matsuda H."/>
            <person name="Matsuzawa S."/>
            <person name="Miki H."/>
            <person name="Mignone F."/>
            <person name="Miyake S."/>
            <person name="Morris K."/>
            <person name="Mottagui-Tabar S."/>
            <person name="Mulder N."/>
            <person name="Nakano N."/>
            <person name="Nakauchi H."/>
            <person name="Ng P."/>
            <person name="Nilsson R."/>
            <person name="Nishiguchi S."/>
            <person name="Nishikawa S."/>
            <person name="Nori F."/>
            <person name="Ohara O."/>
            <person name="Okazaki Y."/>
            <person name="Orlando V."/>
            <person name="Pang K.C."/>
            <person name="Pavan W.J."/>
            <person name="Pavesi G."/>
            <person name="Pesole G."/>
            <person name="Petrovsky N."/>
            <person name="Piazza S."/>
            <person name="Reed J."/>
            <person name="Reid J.F."/>
            <person name="Ring B.Z."/>
            <person name="Ringwald M."/>
            <person name="Rost B."/>
            <person name="Ruan Y."/>
            <person name="Salzberg S.L."/>
            <person name="Sandelin A."/>
            <person name="Schneider C."/>
            <person name="Schoenbach C."/>
            <person name="Sekiguchi K."/>
            <person name="Semple C.A."/>
            <person name="Seno S."/>
            <person name="Sessa L."/>
            <person name="Sheng Y."/>
            <person name="Shibata Y."/>
            <person name="Shimada H."/>
            <person name="Shimada K."/>
            <person name="Silva D."/>
            <person name="Sinclair B."/>
            <person name="Sperling S."/>
            <person name="Stupka E."/>
            <person name="Sugiura K."/>
            <person name="Sultana R."/>
            <person name="Takenaka Y."/>
            <person name="Taki K."/>
            <person name="Tammoja K."/>
            <person name="Tan S.L."/>
            <person name="Tang S."/>
            <person name="Taylor M.S."/>
            <person name="Tegner J."/>
            <person name="Teichmann S.A."/>
            <person name="Ueda H.R."/>
            <person name="van Nimwegen E."/>
            <person name="Verardo R."/>
            <person name="Wei C.L."/>
            <person name="Yagi K."/>
            <person name="Yamanishi H."/>
            <person name="Zabarovsky E."/>
            <person name="Zhu S."/>
            <person name="Zimmer A."/>
            <person name="Hide W."/>
            <person name="Bult C."/>
            <person name="Grimmond S.M."/>
            <person name="Teasdale R.D."/>
            <person name="Liu E.T."/>
            <person name="Brusic V."/>
            <person name="Quackenbush J."/>
            <person name="Wahlestedt C."/>
            <person name="Mattick J.S."/>
            <person name="Hume D.A."/>
            <person name="Kai C."/>
            <person name="Sasaki D."/>
            <person name="Tomaru Y."/>
            <person name="Fukuda S."/>
            <person name="Kanamori-Katayama M."/>
            <person name="Suzuki M."/>
            <person name="Aoki J."/>
            <person name="Arakawa T."/>
            <person name="Iida J."/>
            <person name="Imamura K."/>
            <person name="Itoh M."/>
            <person name="Kato T."/>
            <person name="Kawaji H."/>
            <person name="Kawagashira N."/>
            <person name="Kawashima T."/>
            <person name="Kojima M."/>
            <person name="Kondo S."/>
            <person name="Konno H."/>
            <person name="Nakano K."/>
            <person name="Ninomiya N."/>
            <person name="Nishio T."/>
            <person name="Okada M."/>
            <person name="Plessy C."/>
            <person name="Shibata K."/>
            <person name="Shiraki T."/>
            <person name="Suzuki S."/>
            <person name="Tagami M."/>
            <person name="Waki K."/>
            <person name="Watahiki A."/>
            <person name="Okamura-Oho Y."/>
            <person name="Suzuki H."/>
            <person name="Kawai J."/>
            <person name="Hayashizaki Y."/>
        </authorList>
    </citation>
    <scope>NUCLEOTIDE SEQUENCE [LARGE SCALE MRNA] (ISOFORM 1)</scope>
    <source>
        <strain>C57BL/6J</strain>
        <tissue>Embryo</tissue>
    </source>
</reference>
<reference key="2">
    <citation type="journal article" date="2009" name="PLoS Biol.">
        <title>Lineage-specific biology revealed by a finished genome assembly of the mouse.</title>
        <authorList>
            <person name="Church D.M."/>
            <person name="Goodstadt L."/>
            <person name="Hillier L.W."/>
            <person name="Zody M.C."/>
            <person name="Goldstein S."/>
            <person name="She X."/>
            <person name="Bult C.J."/>
            <person name="Agarwala R."/>
            <person name="Cherry J.L."/>
            <person name="DiCuccio M."/>
            <person name="Hlavina W."/>
            <person name="Kapustin Y."/>
            <person name="Meric P."/>
            <person name="Maglott D."/>
            <person name="Birtle Z."/>
            <person name="Marques A.C."/>
            <person name="Graves T."/>
            <person name="Zhou S."/>
            <person name="Teague B."/>
            <person name="Potamousis K."/>
            <person name="Churas C."/>
            <person name="Place M."/>
            <person name="Herschleb J."/>
            <person name="Runnheim R."/>
            <person name="Forrest D."/>
            <person name="Amos-Landgraf J."/>
            <person name="Schwartz D.C."/>
            <person name="Cheng Z."/>
            <person name="Lindblad-Toh K."/>
            <person name="Eichler E.E."/>
            <person name="Ponting C.P."/>
        </authorList>
    </citation>
    <scope>NUCLEOTIDE SEQUENCE [LARGE SCALE GENOMIC DNA]</scope>
    <source>
        <strain>C57BL/6J</strain>
    </source>
</reference>
<reference key="3">
    <citation type="journal article" date="2004" name="Genome Res.">
        <title>The status, quality, and expansion of the NIH full-length cDNA project: the Mammalian Gene Collection (MGC).</title>
        <authorList>
            <consortium name="The MGC Project Team"/>
        </authorList>
    </citation>
    <scope>NUCLEOTIDE SEQUENCE [LARGE SCALE MRNA] (ISOFORMS 1 AND 2)</scope>
    <source>
        <strain>NMRI</strain>
        <tissue>Mammary tumor</tissue>
    </source>
</reference>
<reference key="4">
    <citation type="journal article" date="2001" name="Biochim. Biophys. Acta">
        <title>Molecular cloning and functional characterization of two murine cDNAs which encode Ubc variants involved in DNA repair and mutagenesis.</title>
        <authorList>
            <person name="Franko J."/>
            <person name="Ashley C."/>
            <person name="Xiao W."/>
        </authorList>
    </citation>
    <scope>NUCLEOTIDE SEQUENCE [MRNA] OF 11-147 (ISOFORM 1)</scope>
    <scope>FUNCTION</scope>
    <scope>INTERACTION WITH UBE2N</scope>
    <scope>TISSUE SPECIFICITY</scope>
</reference>
<reference key="5">
    <citation type="journal article" date="2005" name="Mol. Cell">
        <title>Chaperoned ubiquitylation -- crystal structures of the CHIP U box E3 ubiquitin ligase and a CHIP-Ubc13-Uev1a complex.</title>
        <authorList>
            <person name="Zhang M."/>
            <person name="Windheim M."/>
            <person name="Roe S.M."/>
            <person name="Peggie M."/>
            <person name="Cohen P."/>
            <person name="Prodromou C."/>
            <person name="Pearl L.H."/>
        </authorList>
    </citation>
    <scope>INTERACTION WITH STUB1 AND UBE2N</scope>
</reference>
<evidence type="ECO:0000250" key="1"/>
<evidence type="ECO:0000250" key="2">
    <source>
        <dbReference type="UniProtKB" id="Q13404"/>
    </source>
</evidence>
<evidence type="ECO:0000255" key="3">
    <source>
        <dbReference type="PROSITE-ProRule" id="PRU00388"/>
    </source>
</evidence>
<evidence type="ECO:0000269" key="4">
    <source>
    </source>
</evidence>
<evidence type="ECO:0000303" key="5">
    <source>
    </source>
</evidence>
<evidence type="ECO:0000305" key="6"/>
<sequence length="147" mass="16355">MAATTGSGVKVPRNFRLLEELEEGQKGVGDGTVSWGLEDDEDMTLTRWTGMIIGPPRTIYENRIYSLKIECGPKYPEAPPSVRFVTRVNMSGVSSSNGVVDPRATAVLAKWQNSHSIKVILQELRRLMMSKENMKLPQPPEGQCYSN</sequence>
<proteinExistence type="evidence at protein level"/>
<protein>
    <recommendedName>
        <fullName>Ubiquitin-conjugating enzyme E2 variant 1</fullName>
        <shortName>UEV-1</shortName>
    </recommendedName>
    <alternativeName>
        <fullName>CROC-1</fullName>
    </alternativeName>
</protein>
<accession>Q9CZY3</accession>
<accession>A2A467</accession>
<accession>Q8VEB5</accession>
<accession>Q9ERI7</accession>
<comment type="function">
    <text evidence="1 2 4">Has no ubiquitin ligase activity on its own. The UBE2V1-UBE2N heterodimer catalyzes the synthesis of non-canonical poly-ubiquitin chains that are linked through 'Lys-63'. This type of poly-ubiquitination activates IKK and does not seem to involve protein degradation by the proteasome. Plays a role in the activation of NF-kappa-B mediated by IL1B, TNF, TRAF6 and TRAF2. Mediates transcriptional activation of target genes. Plays a role in the control of progress through the cell cycle and differentiation (By similarity). Plays a role in the error-free DNA repair pathway and contributes to the survival of cells after DNA damage. Promotes TRIM5 capsid-specific restriction activity and the UBE2V1-UBE2N heterodimer acts in concert with TRIM5 to generate 'Lys-63'-linked polyubiquitin chains which activate the MAP3K7/TAK1 complex which in turn results in the induction and expression of NF-kappa-B and MAPK-responsive inflammatory genes (By similarity). Together with RNF135 and UBE2N, catalyzes the viral RNA-dependent 'Lys-63'-linked polyubiquitination of RIGI to activate the downstream signaling pathway that leads to interferon beta production (By similarity). UBE2V1-UBE2N together with TRAF3IP2 E3 ubiquitin ligase mediate 'Lys-63'-linked polyubiquitination of TRAF6, a component of IL17A-mediated signaling pathway.</text>
</comment>
<comment type="subunit">
    <text evidence="1">Heterodimer with UBE2N. Interacts (UBE2V2-UBE2N heterodimer) with the E3 ligase STUB1 (via the U-box domain); the complex has a specific 'Lys-63'-linked polyubiquitination activity. Interacts with TRAF6 (By similarity).</text>
</comment>
<comment type="subcellular location">
    <subcellularLocation>
        <location evidence="1">Nucleus</location>
    </subcellularLocation>
    <text evidence="1">Excluded from the nucleolus.</text>
</comment>
<comment type="alternative products">
    <event type="alternative splicing"/>
    <isoform>
        <id>Q9CZY3-1</id>
        <name>1</name>
        <sequence type="displayed"/>
    </isoform>
    <isoform>
        <id>Q9CZY3-2</id>
        <name>2</name>
        <sequence type="described" ref="VSP_011528"/>
    </isoform>
</comment>
<comment type="tissue specificity">
    <text evidence="4">Ubiquitous. Highly expressed in heart, brain, liver, skeletal msucle, kidney and testis. Detected at lower levels in lung and spleen.</text>
</comment>
<comment type="similarity">
    <text evidence="3">Belongs to the ubiquitin-conjugating enzyme family.</text>
</comment>
<keyword id="KW-0007">Acetylation</keyword>
<keyword id="KW-0025">Alternative splicing</keyword>
<keyword id="KW-0539">Nucleus</keyword>
<keyword id="KW-1185">Reference proteome</keyword>
<keyword id="KW-0833">Ubl conjugation pathway</keyword>
<gene>
    <name type="primary">Ube2v1</name>
    <name type="synonym">Croc1</name>
</gene>
<dbReference type="EMBL" id="AK012021">
    <property type="protein sequence ID" value="BAB27978.1"/>
    <property type="molecule type" value="mRNA"/>
</dbReference>
<dbReference type="EMBL" id="AL589870">
    <property type="status" value="NOT_ANNOTATED_CDS"/>
    <property type="molecule type" value="Genomic_DNA"/>
</dbReference>
<dbReference type="EMBL" id="BC003449">
    <property type="protein sequence ID" value="AAH03449.1"/>
    <property type="molecule type" value="mRNA"/>
</dbReference>
<dbReference type="EMBL" id="BC019372">
    <property type="protein sequence ID" value="AAH19372.1"/>
    <property type="molecule type" value="mRNA"/>
</dbReference>
<dbReference type="EMBL" id="AF303829">
    <property type="protein sequence ID" value="AAG22085.1"/>
    <property type="molecule type" value="mRNA"/>
</dbReference>
<dbReference type="CCDS" id="CCDS17103.1">
    <molecule id="Q9CZY3-1"/>
</dbReference>
<dbReference type="CCDS" id="CCDS79869.1">
    <molecule id="Q9CZY3-2"/>
</dbReference>
<dbReference type="RefSeq" id="NP_001298075.1">
    <molecule id="Q9CZY3-2"/>
    <property type="nucleotide sequence ID" value="NM_001311146.1"/>
</dbReference>
<dbReference type="RefSeq" id="NP_075719.1">
    <molecule id="Q9CZY3-1"/>
    <property type="nucleotide sequence ID" value="NM_023230.2"/>
</dbReference>
<dbReference type="SMR" id="Q9CZY3"/>
<dbReference type="BioGRID" id="211575">
    <property type="interactions" value="14"/>
</dbReference>
<dbReference type="ComplexPortal" id="CPX-616">
    <property type="entry name" value="UBC13-UEV1A ubiquitin-conjugating enzyme E2 complex"/>
</dbReference>
<dbReference type="FunCoup" id="Q9CZY3">
    <property type="interactions" value="3519"/>
</dbReference>
<dbReference type="IntAct" id="Q9CZY3">
    <property type="interactions" value="1"/>
</dbReference>
<dbReference type="GlyGen" id="Q9CZY3">
    <property type="glycosylation" value="1 site, 1 O-linked glycan (1 site)"/>
</dbReference>
<dbReference type="iPTMnet" id="Q9CZY3"/>
<dbReference type="PhosphoSitePlus" id="Q9CZY3"/>
<dbReference type="SwissPalm" id="Q9CZY3"/>
<dbReference type="jPOST" id="Q9CZY3"/>
<dbReference type="PaxDb" id="10090-ENSMUSP00000104830"/>
<dbReference type="PeptideAtlas" id="Q9CZY3"/>
<dbReference type="ProteomicsDB" id="297692">
    <molecule id="Q9CZY3-1"/>
</dbReference>
<dbReference type="ProteomicsDB" id="297693">
    <molecule id="Q9CZY3-2"/>
</dbReference>
<dbReference type="Pumba" id="Q9CZY3"/>
<dbReference type="DNASU" id="66589"/>
<dbReference type="Ensembl" id="ENSMUST00000060645.13">
    <molecule id="Q9CZY3-2"/>
    <property type="protein sequence ID" value="ENSMUSP00000053109.7"/>
    <property type="gene ID" value="ENSMUSG00000078923.11"/>
</dbReference>
<dbReference type="Ensembl" id="ENSMUST00000109207.10">
    <molecule id="Q9CZY3-1"/>
    <property type="protein sequence ID" value="ENSMUSP00000104830.4"/>
    <property type="gene ID" value="ENSMUSG00000078923.11"/>
</dbReference>
<dbReference type="GeneID" id="66589"/>
<dbReference type="KEGG" id="mmu:66589"/>
<dbReference type="UCSC" id="uc008oaa.1">
    <molecule id="Q9CZY3-1"/>
    <property type="organism name" value="mouse"/>
</dbReference>
<dbReference type="UCSC" id="uc008oab.1">
    <molecule id="Q9CZY3-2"/>
    <property type="organism name" value="mouse"/>
</dbReference>
<dbReference type="AGR" id="MGI:1913839"/>
<dbReference type="CTD" id="7335"/>
<dbReference type="MGI" id="MGI:1913839">
    <property type="gene designation" value="Ube2v1"/>
</dbReference>
<dbReference type="VEuPathDB" id="HostDB:ENSMUSG00000078923"/>
<dbReference type="eggNOG" id="KOG0896">
    <property type="taxonomic scope" value="Eukaryota"/>
</dbReference>
<dbReference type="GeneTree" id="ENSGT00940000158854"/>
<dbReference type="HOGENOM" id="CLU_063065_3_0_1"/>
<dbReference type="InParanoid" id="Q9CZY3"/>
<dbReference type="OMA" id="GPESCSY"/>
<dbReference type="OrthoDB" id="6508832at2759"/>
<dbReference type="PhylomeDB" id="Q9CZY3"/>
<dbReference type="TreeFam" id="TF316971"/>
<dbReference type="Reactome" id="R-MMU-168638">
    <property type="pathway name" value="NOD1/2 Signaling Pathway"/>
</dbReference>
<dbReference type="Reactome" id="R-MMU-202424">
    <property type="pathway name" value="Downstream TCR signaling"/>
</dbReference>
<dbReference type="Reactome" id="R-MMU-2871837">
    <property type="pathway name" value="FCERI mediated NF-kB activation"/>
</dbReference>
<dbReference type="Reactome" id="R-MMU-445989">
    <property type="pathway name" value="TAK1-dependent IKK and NF-kappa-B activation"/>
</dbReference>
<dbReference type="Reactome" id="R-MMU-450302">
    <property type="pathway name" value="activated TAK1 mediates p38 MAPK activation"/>
</dbReference>
<dbReference type="Reactome" id="R-MMU-450321">
    <property type="pathway name" value="JNK (c-Jun kinases) phosphorylation and activation mediated by activated human TAK1"/>
</dbReference>
<dbReference type="Reactome" id="R-MMU-5205685">
    <property type="pathway name" value="PINK1-PRKN Mediated Mitophagy"/>
</dbReference>
<dbReference type="Reactome" id="R-MMU-5607764">
    <property type="pathway name" value="CLEC7A (Dectin-1) signaling"/>
</dbReference>
<dbReference type="Reactome" id="R-MMU-9020702">
    <property type="pathway name" value="Interleukin-1 signaling"/>
</dbReference>
<dbReference type="Reactome" id="R-MMU-937039">
    <property type="pathway name" value="IRAK1 recruits IKK complex"/>
</dbReference>
<dbReference type="Reactome" id="R-MMU-937041">
    <property type="pathway name" value="IKK complex recruitment mediated by RIP1"/>
</dbReference>
<dbReference type="Reactome" id="R-MMU-9646399">
    <property type="pathway name" value="Aggrephagy"/>
</dbReference>
<dbReference type="Reactome" id="R-MMU-975144">
    <property type="pathway name" value="IRAK1 recruits IKK complex upon TLR7/8 or 9 stimulation"/>
</dbReference>
<dbReference type="Reactome" id="R-MMU-983168">
    <property type="pathway name" value="Antigen processing: Ubiquitination &amp; Proteasome degradation"/>
</dbReference>
<dbReference type="BioGRID-ORCS" id="66589">
    <property type="hits" value="7 hits in 96 CRISPR screens"/>
</dbReference>
<dbReference type="ChiTaRS" id="Ube2v1">
    <property type="organism name" value="mouse"/>
</dbReference>
<dbReference type="PRO" id="PR:Q9CZY3"/>
<dbReference type="Proteomes" id="UP000000589">
    <property type="component" value="Chromosome 2"/>
</dbReference>
<dbReference type="RNAct" id="Q9CZY3">
    <property type="molecule type" value="protein"/>
</dbReference>
<dbReference type="Bgee" id="ENSMUSG00000078923">
    <property type="expression patterns" value="Expressed in embryonic post-anal tail and 63 other cell types or tissues"/>
</dbReference>
<dbReference type="ExpressionAtlas" id="Q9CZY3">
    <property type="expression patterns" value="baseline and differential"/>
</dbReference>
<dbReference type="GO" id="GO:0005829">
    <property type="term" value="C:cytosol"/>
    <property type="evidence" value="ECO:0000266"/>
    <property type="project" value="ComplexPortal"/>
</dbReference>
<dbReference type="GO" id="GO:0005654">
    <property type="term" value="C:nucleoplasm"/>
    <property type="evidence" value="ECO:0007669"/>
    <property type="project" value="Ensembl"/>
</dbReference>
<dbReference type="GO" id="GO:0032991">
    <property type="term" value="C:protein-containing complex"/>
    <property type="evidence" value="ECO:0000266"/>
    <property type="project" value="MGI"/>
</dbReference>
<dbReference type="GO" id="GO:0031372">
    <property type="term" value="C:UBC13-MMS2 complex"/>
    <property type="evidence" value="ECO:0000250"/>
    <property type="project" value="UniProtKB"/>
</dbReference>
<dbReference type="GO" id="GO:0000151">
    <property type="term" value="C:ubiquitin ligase complex"/>
    <property type="evidence" value="ECO:0000250"/>
    <property type="project" value="UniProtKB"/>
</dbReference>
<dbReference type="GO" id="GO:0031624">
    <property type="term" value="F:ubiquitin conjugating enzyme binding"/>
    <property type="evidence" value="ECO:0000353"/>
    <property type="project" value="MGI"/>
</dbReference>
<dbReference type="GO" id="GO:0042275">
    <property type="term" value="P:error-free postreplication DNA repair"/>
    <property type="evidence" value="ECO:0000316"/>
    <property type="project" value="MGI"/>
</dbReference>
<dbReference type="GO" id="GO:0043123">
    <property type="term" value="P:positive regulation of canonical NF-kappaB signal transduction"/>
    <property type="evidence" value="ECO:0007669"/>
    <property type="project" value="Ensembl"/>
</dbReference>
<dbReference type="GO" id="GO:1902533">
    <property type="term" value="P:positive regulation of intracellular signal transduction"/>
    <property type="evidence" value="ECO:0000266"/>
    <property type="project" value="ComplexPortal"/>
</dbReference>
<dbReference type="GO" id="GO:1902523">
    <property type="term" value="P:positive regulation of protein K63-linked ubiquitination"/>
    <property type="evidence" value="ECO:0000266"/>
    <property type="project" value="ComplexPortal"/>
</dbReference>
<dbReference type="GO" id="GO:0070534">
    <property type="term" value="P:protein K63-linked ubiquitination"/>
    <property type="evidence" value="ECO:0000250"/>
    <property type="project" value="UniProtKB"/>
</dbReference>
<dbReference type="CDD" id="cd23807">
    <property type="entry name" value="UEV_UBE2V"/>
    <property type="match status" value="1"/>
</dbReference>
<dbReference type="FunFam" id="3.10.110.10:FF:000012">
    <property type="entry name" value="Ubiquitin-conjugating enzyme E2 variant 2"/>
    <property type="match status" value="1"/>
</dbReference>
<dbReference type="Gene3D" id="3.10.110.10">
    <property type="entry name" value="Ubiquitin Conjugating Enzyme"/>
    <property type="match status" value="1"/>
</dbReference>
<dbReference type="InterPro" id="IPR000608">
    <property type="entry name" value="UBQ-conjugat_E2_core"/>
</dbReference>
<dbReference type="InterPro" id="IPR016135">
    <property type="entry name" value="UBQ-conjugating_enzyme/RWD"/>
</dbReference>
<dbReference type="PANTHER" id="PTHR24068">
    <property type="entry name" value="UBIQUITIN-CONJUGATING ENZYME E2"/>
    <property type="match status" value="1"/>
</dbReference>
<dbReference type="Pfam" id="PF00179">
    <property type="entry name" value="UQ_con"/>
    <property type="match status" value="1"/>
</dbReference>
<dbReference type="SMART" id="SM00212">
    <property type="entry name" value="UBCc"/>
    <property type="match status" value="1"/>
</dbReference>
<dbReference type="SUPFAM" id="SSF54495">
    <property type="entry name" value="UBC-like"/>
    <property type="match status" value="1"/>
</dbReference>
<dbReference type="PROSITE" id="PS50127">
    <property type="entry name" value="UBC_2"/>
    <property type="match status" value="1"/>
</dbReference>
<name>UB2V1_MOUSE</name>
<organism>
    <name type="scientific">Mus musculus</name>
    <name type="common">Mouse</name>
    <dbReference type="NCBI Taxonomy" id="10090"/>
    <lineage>
        <taxon>Eukaryota</taxon>
        <taxon>Metazoa</taxon>
        <taxon>Chordata</taxon>
        <taxon>Craniata</taxon>
        <taxon>Vertebrata</taxon>
        <taxon>Euteleostomi</taxon>
        <taxon>Mammalia</taxon>
        <taxon>Eutheria</taxon>
        <taxon>Euarchontoglires</taxon>
        <taxon>Glires</taxon>
        <taxon>Rodentia</taxon>
        <taxon>Myomorpha</taxon>
        <taxon>Muroidea</taxon>
        <taxon>Muridae</taxon>
        <taxon>Murinae</taxon>
        <taxon>Mus</taxon>
        <taxon>Mus</taxon>
    </lineage>
</organism>
<feature type="initiator methionine" description="Removed" evidence="2">
    <location>
        <position position="1"/>
    </location>
</feature>
<feature type="chain" id="PRO_0000082601" description="Ubiquitin-conjugating enzyme E2 variant 1">
    <location>
        <begin position="2"/>
        <end position="147"/>
    </location>
</feature>
<feature type="domain" description="UBC core" evidence="3">
    <location>
        <begin position="12"/>
        <end position="147"/>
    </location>
</feature>
<feature type="modified residue" description="N-acetylalanine" evidence="2">
    <location>
        <position position="2"/>
    </location>
</feature>
<feature type="splice variant" id="VSP_011528" description="In isoform 2." evidence="5">
    <location>
        <begin position="58"/>
        <end position="99"/>
    </location>
</feature>
<feature type="sequence conflict" description="In Ref. 4; AAG22085." evidence="6" ref="4">
    <original>I</original>
    <variation>M</variation>
    <location>
        <position position="59"/>
    </location>
</feature>
<feature type="sequence conflict" description="In Ref. 4; AAG22085." evidence="6" ref="4">
    <original>S</original>
    <variation>G</variation>
    <location>
        <position position="66"/>
    </location>
</feature>
<feature type="sequence conflict" description="In Ref. 4; AAG22085." evidence="6" ref="4">
    <original>A</original>
    <variation>P</variation>
    <location>
        <position position="78"/>
    </location>
</feature>
<feature type="sequence conflict" description="In Ref. 4; AAG22085." evidence="6" ref="4">
    <original>V</original>
    <variation>M</variation>
    <location>
        <position position="100"/>
    </location>
</feature>
<feature type="sequence conflict" description="In Ref. 3; AAH19372." evidence="6" ref="3">
    <original>L</original>
    <variation>P</variation>
    <location>
        <position position="108"/>
    </location>
</feature>